<keyword id="KW-0143">Chaperone</keyword>
<keyword id="KW-0963">Cytoplasm</keyword>
<keyword id="KW-1185">Reference proteome</keyword>
<dbReference type="EMBL" id="CP000240">
    <property type="protein sequence ID" value="ABD02580.1"/>
    <property type="molecule type" value="Genomic_DNA"/>
</dbReference>
<dbReference type="RefSeq" id="WP_011433225.1">
    <property type="nucleotide sequence ID" value="NC_007776.1"/>
</dbReference>
<dbReference type="SMR" id="Q2JL42"/>
<dbReference type="STRING" id="321332.CYB_1619"/>
<dbReference type="KEGG" id="cyb:CYB_1619"/>
<dbReference type="eggNOG" id="COG0234">
    <property type="taxonomic scope" value="Bacteria"/>
</dbReference>
<dbReference type="HOGENOM" id="CLU_132825_2_1_3"/>
<dbReference type="OrthoDB" id="9806791at2"/>
<dbReference type="Proteomes" id="UP000001938">
    <property type="component" value="Chromosome"/>
</dbReference>
<dbReference type="GO" id="GO:0005737">
    <property type="term" value="C:cytoplasm"/>
    <property type="evidence" value="ECO:0007669"/>
    <property type="project" value="UniProtKB-SubCell"/>
</dbReference>
<dbReference type="GO" id="GO:0005524">
    <property type="term" value="F:ATP binding"/>
    <property type="evidence" value="ECO:0007669"/>
    <property type="project" value="InterPro"/>
</dbReference>
<dbReference type="GO" id="GO:0046872">
    <property type="term" value="F:metal ion binding"/>
    <property type="evidence" value="ECO:0007669"/>
    <property type="project" value="TreeGrafter"/>
</dbReference>
<dbReference type="GO" id="GO:0044183">
    <property type="term" value="F:protein folding chaperone"/>
    <property type="evidence" value="ECO:0007669"/>
    <property type="project" value="InterPro"/>
</dbReference>
<dbReference type="GO" id="GO:0051087">
    <property type="term" value="F:protein-folding chaperone binding"/>
    <property type="evidence" value="ECO:0007669"/>
    <property type="project" value="TreeGrafter"/>
</dbReference>
<dbReference type="GO" id="GO:0051082">
    <property type="term" value="F:unfolded protein binding"/>
    <property type="evidence" value="ECO:0007669"/>
    <property type="project" value="TreeGrafter"/>
</dbReference>
<dbReference type="GO" id="GO:0051085">
    <property type="term" value="P:chaperone cofactor-dependent protein refolding"/>
    <property type="evidence" value="ECO:0007669"/>
    <property type="project" value="TreeGrafter"/>
</dbReference>
<dbReference type="CDD" id="cd00320">
    <property type="entry name" value="cpn10"/>
    <property type="match status" value="1"/>
</dbReference>
<dbReference type="FunFam" id="2.30.33.40:FF:000001">
    <property type="entry name" value="10 kDa chaperonin"/>
    <property type="match status" value="1"/>
</dbReference>
<dbReference type="Gene3D" id="2.30.33.40">
    <property type="entry name" value="GroES chaperonin"/>
    <property type="match status" value="1"/>
</dbReference>
<dbReference type="HAMAP" id="MF_00580">
    <property type="entry name" value="CH10"/>
    <property type="match status" value="1"/>
</dbReference>
<dbReference type="InterPro" id="IPR020818">
    <property type="entry name" value="Chaperonin_GroES"/>
</dbReference>
<dbReference type="InterPro" id="IPR037124">
    <property type="entry name" value="Chaperonin_GroES_sf"/>
</dbReference>
<dbReference type="InterPro" id="IPR018369">
    <property type="entry name" value="Chaprnonin_Cpn10_CS"/>
</dbReference>
<dbReference type="InterPro" id="IPR011032">
    <property type="entry name" value="GroES-like_sf"/>
</dbReference>
<dbReference type="NCBIfam" id="NF001527">
    <property type="entry name" value="PRK00364.1-2"/>
    <property type="match status" value="1"/>
</dbReference>
<dbReference type="NCBIfam" id="NF001530">
    <property type="entry name" value="PRK00364.1-6"/>
    <property type="match status" value="1"/>
</dbReference>
<dbReference type="NCBIfam" id="NF001531">
    <property type="entry name" value="PRK00364.2-2"/>
    <property type="match status" value="1"/>
</dbReference>
<dbReference type="NCBIfam" id="NF001533">
    <property type="entry name" value="PRK00364.2-4"/>
    <property type="match status" value="1"/>
</dbReference>
<dbReference type="NCBIfam" id="NF001534">
    <property type="entry name" value="PRK00364.2-5"/>
    <property type="match status" value="1"/>
</dbReference>
<dbReference type="PANTHER" id="PTHR10772">
    <property type="entry name" value="10 KDA HEAT SHOCK PROTEIN"/>
    <property type="match status" value="1"/>
</dbReference>
<dbReference type="PANTHER" id="PTHR10772:SF58">
    <property type="entry name" value="CO-CHAPERONIN GROES"/>
    <property type="match status" value="1"/>
</dbReference>
<dbReference type="Pfam" id="PF00166">
    <property type="entry name" value="Cpn10"/>
    <property type="match status" value="1"/>
</dbReference>
<dbReference type="PRINTS" id="PR00297">
    <property type="entry name" value="CHAPERONIN10"/>
</dbReference>
<dbReference type="SMART" id="SM00883">
    <property type="entry name" value="Cpn10"/>
    <property type="match status" value="1"/>
</dbReference>
<dbReference type="SUPFAM" id="SSF50129">
    <property type="entry name" value="GroES-like"/>
    <property type="match status" value="1"/>
</dbReference>
<dbReference type="PROSITE" id="PS00681">
    <property type="entry name" value="CHAPERONINS_CPN10"/>
    <property type="match status" value="1"/>
</dbReference>
<name>CH10_SYNJB</name>
<reference key="1">
    <citation type="journal article" date="2007" name="ISME J.">
        <title>Population level functional diversity in a microbial community revealed by comparative genomic and metagenomic analyses.</title>
        <authorList>
            <person name="Bhaya D."/>
            <person name="Grossman A.R."/>
            <person name="Steunou A.-S."/>
            <person name="Khuri N."/>
            <person name="Cohan F.M."/>
            <person name="Hamamura N."/>
            <person name="Melendrez M.C."/>
            <person name="Bateson M.M."/>
            <person name="Ward D.M."/>
            <person name="Heidelberg J.F."/>
        </authorList>
    </citation>
    <scope>NUCLEOTIDE SEQUENCE [LARGE SCALE GENOMIC DNA]</scope>
    <source>
        <strain>JA-2-3B'a(2-13)</strain>
    </source>
</reference>
<organism>
    <name type="scientific">Synechococcus sp. (strain JA-2-3B'a(2-13))</name>
    <name type="common">Cyanobacteria bacterium Yellowstone B-Prime</name>
    <dbReference type="NCBI Taxonomy" id="321332"/>
    <lineage>
        <taxon>Bacteria</taxon>
        <taxon>Bacillati</taxon>
        <taxon>Cyanobacteriota</taxon>
        <taxon>Cyanophyceae</taxon>
        <taxon>Synechococcales</taxon>
        <taxon>Synechococcaceae</taxon>
        <taxon>Synechococcus</taxon>
    </lineage>
</organism>
<protein>
    <recommendedName>
        <fullName evidence="1">Co-chaperonin GroES</fullName>
    </recommendedName>
    <alternativeName>
        <fullName evidence="1">10 kDa chaperonin</fullName>
    </alternativeName>
    <alternativeName>
        <fullName evidence="1">Chaperonin-10</fullName>
        <shortName evidence="1">Cpn10</shortName>
    </alternativeName>
</protein>
<gene>
    <name evidence="1" type="primary">groES</name>
    <name evidence="1" type="synonym">groS</name>
    <name type="ordered locus">CYB_1619</name>
</gene>
<sequence>MAAVALNVSTLKPLGDRVLVKIAQQDEKTAGGIFLPDTAKEKPQVGEVVAVGPGKRNDEGKLIPMELKAGDKVLYSKYAGTEVKLGSDEYVLLAERDILAIVQ</sequence>
<evidence type="ECO:0000255" key="1">
    <source>
        <dbReference type="HAMAP-Rule" id="MF_00580"/>
    </source>
</evidence>
<proteinExistence type="inferred from homology"/>
<feature type="chain" id="PRO_1000025385" description="Co-chaperonin GroES">
    <location>
        <begin position="1"/>
        <end position="103"/>
    </location>
</feature>
<comment type="function">
    <text evidence="1">Together with the chaperonin GroEL, plays an essential role in assisting protein folding. The GroEL-GroES system forms a nano-cage that allows encapsulation of the non-native substrate proteins and provides a physical environment optimized to promote and accelerate protein folding. GroES binds to the apical surface of the GroEL ring, thereby capping the opening of the GroEL channel.</text>
</comment>
<comment type="subunit">
    <text evidence="1">Heptamer of 7 subunits arranged in a ring. Interacts with the chaperonin GroEL.</text>
</comment>
<comment type="subcellular location">
    <subcellularLocation>
        <location evidence="1">Cytoplasm</location>
    </subcellularLocation>
</comment>
<comment type="similarity">
    <text evidence="1">Belongs to the GroES chaperonin family.</text>
</comment>
<accession>Q2JL42</accession>